<comment type="function">
    <text evidence="1">One of the primary rRNA binding proteins, it binds directly to 16S rRNA where it nucleates assembly of the head domain of the 30S subunit. Is located at the subunit interface close to the decoding center, probably blocks exit of the E-site tRNA.</text>
</comment>
<comment type="subunit">
    <text evidence="1">Part of the 30S ribosomal subunit. Contacts proteins S9 and S11.</text>
</comment>
<comment type="similarity">
    <text evidence="1">Belongs to the universal ribosomal protein uS7 family.</text>
</comment>
<protein>
    <recommendedName>
        <fullName evidence="1">Small ribosomal subunit protein uS7</fullName>
    </recommendedName>
    <alternativeName>
        <fullName evidence="2">30S ribosomal protein S7</fullName>
    </alternativeName>
</protein>
<keyword id="KW-0687">Ribonucleoprotein</keyword>
<keyword id="KW-0689">Ribosomal protein</keyword>
<keyword id="KW-0694">RNA-binding</keyword>
<keyword id="KW-0699">rRNA-binding</keyword>
<keyword id="KW-0820">tRNA-binding</keyword>
<sequence>MSRKGSTPQRTVLPDPKHGSETIARFINMVMQSGKKSVAEKIVYGAMDVIGEKNPNAIELVQKALDNVAPAVEVKSRRVGGATYQVPVEVRSSRRMALAMRWLIDSARKRGENTMPRKLAAELLDASESRGGAIKKREETHRMAEANKAFAHYRW</sequence>
<evidence type="ECO:0000255" key="1">
    <source>
        <dbReference type="HAMAP-Rule" id="MF_00480"/>
    </source>
</evidence>
<evidence type="ECO:0000305" key="2"/>
<name>RS7_XANE5</name>
<proteinExistence type="inferred from homology"/>
<accession>Q3BWY8</accession>
<organism>
    <name type="scientific">Xanthomonas euvesicatoria pv. vesicatoria (strain 85-10)</name>
    <name type="common">Xanthomonas campestris pv. vesicatoria</name>
    <dbReference type="NCBI Taxonomy" id="316273"/>
    <lineage>
        <taxon>Bacteria</taxon>
        <taxon>Pseudomonadati</taxon>
        <taxon>Pseudomonadota</taxon>
        <taxon>Gammaproteobacteria</taxon>
        <taxon>Lysobacterales</taxon>
        <taxon>Lysobacteraceae</taxon>
        <taxon>Xanthomonas</taxon>
    </lineage>
</organism>
<gene>
    <name evidence="1" type="primary">rpsG</name>
    <name type="ordered locus">XCV0994</name>
</gene>
<dbReference type="EMBL" id="AM039952">
    <property type="protein sequence ID" value="CAJ22625.1"/>
    <property type="molecule type" value="Genomic_DNA"/>
</dbReference>
<dbReference type="RefSeq" id="WP_005917592.1">
    <property type="nucleotide sequence ID" value="NZ_CP017190.1"/>
</dbReference>
<dbReference type="SMR" id="Q3BWY8"/>
<dbReference type="STRING" id="456327.BJD11_17765"/>
<dbReference type="GeneID" id="97509331"/>
<dbReference type="KEGG" id="xcv:XCV0994"/>
<dbReference type="eggNOG" id="COG0049">
    <property type="taxonomic scope" value="Bacteria"/>
</dbReference>
<dbReference type="HOGENOM" id="CLU_072226_1_1_6"/>
<dbReference type="Proteomes" id="UP000007069">
    <property type="component" value="Chromosome"/>
</dbReference>
<dbReference type="GO" id="GO:0015935">
    <property type="term" value="C:small ribosomal subunit"/>
    <property type="evidence" value="ECO:0007669"/>
    <property type="project" value="InterPro"/>
</dbReference>
<dbReference type="GO" id="GO:0019843">
    <property type="term" value="F:rRNA binding"/>
    <property type="evidence" value="ECO:0007669"/>
    <property type="project" value="UniProtKB-UniRule"/>
</dbReference>
<dbReference type="GO" id="GO:0003735">
    <property type="term" value="F:structural constituent of ribosome"/>
    <property type="evidence" value="ECO:0007669"/>
    <property type="project" value="InterPro"/>
</dbReference>
<dbReference type="GO" id="GO:0000049">
    <property type="term" value="F:tRNA binding"/>
    <property type="evidence" value="ECO:0007669"/>
    <property type="project" value="UniProtKB-UniRule"/>
</dbReference>
<dbReference type="GO" id="GO:0006412">
    <property type="term" value="P:translation"/>
    <property type="evidence" value="ECO:0007669"/>
    <property type="project" value="UniProtKB-UniRule"/>
</dbReference>
<dbReference type="CDD" id="cd14869">
    <property type="entry name" value="uS7_Bacteria"/>
    <property type="match status" value="1"/>
</dbReference>
<dbReference type="FunFam" id="1.10.455.10:FF:000001">
    <property type="entry name" value="30S ribosomal protein S7"/>
    <property type="match status" value="1"/>
</dbReference>
<dbReference type="Gene3D" id="1.10.455.10">
    <property type="entry name" value="Ribosomal protein S7 domain"/>
    <property type="match status" value="1"/>
</dbReference>
<dbReference type="HAMAP" id="MF_00480_B">
    <property type="entry name" value="Ribosomal_uS7_B"/>
    <property type="match status" value="1"/>
</dbReference>
<dbReference type="InterPro" id="IPR000235">
    <property type="entry name" value="Ribosomal_uS7"/>
</dbReference>
<dbReference type="InterPro" id="IPR005717">
    <property type="entry name" value="Ribosomal_uS7_bac/org-type"/>
</dbReference>
<dbReference type="InterPro" id="IPR020606">
    <property type="entry name" value="Ribosomal_uS7_CS"/>
</dbReference>
<dbReference type="InterPro" id="IPR023798">
    <property type="entry name" value="Ribosomal_uS7_dom"/>
</dbReference>
<dbReference type="InterPro" id="IPR036823">
    <property type="entry name" value="Ribosomal_uS7_dom_sf"/>
</dbReference>
<dbReference type="NCBIfam" id="TIGR01029">
    <property type="entry name" value="rpsG_bact"/>
    <property type="match status" value="1"/>
</dbReference>
<dbReference type="PANTHER" id="PTHR11205">
    <property type="entry name" value="RIBOSOMAL PROTEIN S7"/>
    <property type="match status" value="1"/>
</dbReference>
<dbReference type="Pfam" id="PF00177">
    <property type="entry name" value="Ribosomal_S7"/>
    <property type="match status" value="1"/>
</dbReference>
<dbReference type="PIRSF" id="PIRSF002122">
    <property type="entry name" value="RPS7p_RPS7a_RPS5e_RPS7o"/>
    <property type="match status" value="1"/>
</dbReference>
<dbReference type="SUPFAM" id="SSF47973">
    <property type="entry name" value="Ribosomal protein S7"/>
    <property type="match status" value="1"/>
</dbReference>
<dbReference type="PROSITE" id="PS00052">
    <property type="entry name" value="RIBOSOMAL_S7"/>
    <property type="match status" value="1"/>
</dbReference>
<feature type="chain" id="PRO_0000226541" description="Small ribosomal subunit protein uS7">
    <location>
        <begin position="1"/>
        <end position="155"/>
    </location>
</feature>
<reference key="1">
    <citation type="journal article" date="2005" name="J. Bacteriol.">
        <title>Insights into genome plasticity and pathogenicity of the plant pathogenic Bacterium Xanthomonas campestris pv. vesicatoria revealed by the complete genome sequence.</title>
        <authorList>
            <person name="Thieme F."/>
            <person name="Koebnik R."/>
            <person name="Bekel T."/>
            <person name="Berger C."/>
            <person name="Boch J."/>
            <person name="Buettner D."/>
            <person name="Caldana C."/>
            <person name="Gaigalat L."/>
            <person name="Goesmann A."/>
            <person name="Kay S."/>
            <person name="Kirchner O."/>
            <person name="Lanz C."/>
            <person name="Linke B."/>
            <person name="McHardy A.C."/>
            <person name="Meyer F."/>
            <person name="Mittenhuber G."/>
            <person name="Nies D.H."/>
            <person name="Niesbach-Kloesgen U."/>
            <person name="Patschkowski T."/>
            <person name="Rueckert C."/>
            <person name="Rupp O."/>
            <person name="Schneiker S."/>
            <person name="Schuster S.C."/>
            <person name="Vorhoelter F.J."/>
            <person name="Weber E."/>
            <person name="Puehler A."/>
            <person name="Bonas U."/>
            <person name="Bartels D."/>
            <person name="Kaiser O."/>
        </authorList>
    </citation>
    <scope>NUCLEOTIDE SEQUENCE [LARGE SCALE GENOMIC DNA]</scope>
    <source>
        <strain>85-10</strain>
    </source>
</reference>